<feature type="chain" id="PRO_1000023345" description="DNA-binding protein Fis">
    <location>
        <begin position="1"/>
        <end position="98"/>
    </location>
</feature>
<feature type="DNA-binding region" description="H-T-H motif" evidence="1">
    <location>
        <begin position="74"/>
        <end position="93"/>
    </location>
</feature>
<gene>
    <name evidence="1" type="primary">fis</name>
    <name type="ordered locus">SBO_3255</name>
</gene>
<dbReference type="EMBL" id="CP000036">
    <property type="protein sequence ID" value="ABB67751.1"/>
    <property type="molecule type" value="Genomic_DNA"/>
</dbReference>
<dbReference type="RefSeq" id="WP_000462905.1">
    <property type="nucleotide sequence ID" value="NC_007613.1"/>
</dbReference>
<dbReference type="SMR" id="Q31W07"/>
<dbReference type="GeneID" id="98390389"/>
<dbReference type="KEGG" id="sbo:SBO_3255"/>
<dbReference type="HOGENOM" id="CLU_158040_3_0_6"/>
<dbReference type="Proteomes" id="UP000007067">
    <property type="component" value="Chromosome"/>
</dbReference>
<dbReference type="GO" id="GO:0003700">
    <property type="term" value="F:DNA-binding transcription factor activity"/>
    <property type="evidence" value="ECO:0007669"/>
    <property type="project" value="UniProtKB-UniRule"/>
</dbReference>
<dbReference type="GO" id="GO:0043565">
    <property type="term" value="F:sequence-specific DNA binding"/>
    <property type="evidence" value="ECO:0007669"/>
    <property type="project" value="InterPro"/>
</dbReference>
<dbReference type="FunFam" id="1.10.10.60:FF:000006">
    <property type="entry name" value="DNA-binding protein Fis"/>
    <property type="match status" value="1"/>
</dbReference>
<dbReference type="Gene3D" id="1.10.10.60">
    <property type="entry name" value="Homeodomain-like"/>
    <property type="match status" value="1"/>
</dbReference>
<dbReference type="HAMAP" id="MF_00166">
    <property type="entry name" value="DNA_binding_Fis"/>
    <property type="match status" value="1"/>
</dbReference>
<dbReference type="InterPro" id="IPR005412">
    <property type="entry name" value="Fis_DNA-bd"/>
</dbReference>
<dbReference type="InterPro" id="IPR009057">
    <property type="entry name" value="Homeodomain-like_sf"/>
</dbReference>
<dbReference type="InterPro" id="IPR002197">
    <property type="entry name" value="HTH_Fis"/>
</dbReference>
<dbReference type="InterPro" id="IPR050207">
    <property type="entry name" value="Trans_regulatory_Fis"/>
</dbReference>
<dbReference type="NCBIfam" id="NF001659">
    <property type="entry name" value="PRK00430.1"/>
    <property type="match status" value="1"/>
</dbReference>
<dbReference type="PANTHER" id="PTHR47918">
    <property type="entry name" value="DNA-BINDING PROTEIN FIS"/>
    <property type="match status" value="1"/>
</dbReference>
<dbReference type="PANTHER" id="PTHR47918:SF1">
    <property type="entry name" value="DNA-BINDING PROTEIN FIS"/>
    <property type="match status" value="1"/>
</dbReference>
<dbReference type="Pfam" id="PF02954">
    <property type="entry name" value="HTH_8"/>
    <property type="match status" value="1"/>
</dbReference>
<dbReference type="PIRSF" id="PIRSF002097">
    <property type="entry name" value="DNA-binding_Fis"/>
    <property type="match status" value="1"/>
</dbReference>
<dbReference type="PRINTS" id="PR01591">
    <property type="entry name" value="DNABINDNGFIS"/>
</dbReference>
<dbReference type="PRINTS" id="PR01590">
    <property type="entry name" value="HTHFIS"/>
</dbReference>
<dbReference type="SUPFAM" id="SSF46689">
    <property type="entry name" value="Homeodomain-like"/>
    <property type="match status" value="1"/>
</dbReference>
<comment type="function">
    <text evidence="1">Activates ribosomal RNA transcription. Plays a direct role in upstream activation of rRNA promoters.</text>
</comment>
<comment type="subunit">
    <text evidence="1">Homodimer.</text>
</comment>
<comment type="similarity">
    <text evidence="1">Belongs to the transcriptional regulatory Fis family.</text>
</comment>
<accession>Q31W07</accession>
<keyword id="KW-0010">Activator</keyword>
<keyword id="KW-0238">DNA-binding</keyword>
<keyword id="KW-0804">Transcription</keyword>
<keyword id="KW-0805">Transcription regulation</keyword>
<sequence length="98" mass="11240">MFEQRVNSDVLTVSTVNSQDQVTQKPLRDSVKQALKNYFAQLNGQDVNDLYELVLAEVEQPLLDMVMQYTRGNQTRAALMMGINRGTLRKKLKKYGMN</sequence>
<name>FIS_SHIBS</name>
<proteinExistence type="inferred from homology"/>
<evidence type="ECO:0000255" key="1">
    <source>
        <dbReference type="HAMAP-Rule" id="MF_00166"/>
    </source>
</evidence>
<reference key="1">
    <citation type="journal article" date="2005" name="Nucleic Acids Res.">
        <title>Genome dynamics and diversity of Shigella species, the etiologic agents of bacillary dysentery.</title>
        <authorList>
            <person name="Yang F."/>
            <person name="Yang J."/>
            <person name="Zhang X."/>
            <person name="Chen L."/>
            <person name="Jiang Y."/>
            <person name="Yan Y."/>
            <person name="Tang X."/>
            <person name="Wang J."/>
            <person name="Xiong Z."/>
            <person name="Dong J."/>
            <person name="Xue Y."/>
            <person name="Zhu Y."/>
            <person name="Xu X."/>
            <person name="Sun L."/>
            <person name="Chen S."/>
            <person name="Nie H."/>
            <person name="Peng J."/>
            <person name="Xu J."/>
            <person name="Wang Y."/>
            <person name="Yuan Z."/>
            <person name="Wen Y."/>
            <person name="Yao Z."/>
            <person name="Shen Y."/>
            <person name="Qiang B."/>
            <person name="Hou Y."/>
            <person name="Yu J."/>
            <person name="Jin Q."/>
        </authorList>
    </citation>
    <scope>NUCLEOTIDE SEQUENCE [LARGE SCALE GENOMIC DNA]</scope>
    <source>
        <strain>Sb227</strain>
    </source>
</reference>
<protein>
    <recommendedName>
        <fullName evidence="1">DNA-binding protein Fis</fullName>
    </recommendedName>
</protein>
<organism>
    <name type="scientific">Shigella boydii serotype 4 (strain Sb227)</name>
    <dbReference type="NCBI Taxonomy" id="300268"/>
    <lineage>
        <taxon>Bacteria</taxon>
        <taxon>Pseudomonadati</taxon>
        <taxon>Pseudomonadota</taxon>
        <taxon>Gammaproteobacteria</taxon>
        <taxon>Enterobacterales</taxon>
        <taxon>Enterobacteriaceae</taxon>
        <taxon>Shigella</taxon>
    </lineage>
</organism>